<reference key="1">
    <citation type="journal article" date="2005" name="Science">
        <title>The transcriptional landscape of the mammalian genome.</title>
        <authorList>
            <person name="Carninci P."/>
            <person name="Kasukawa T."/>
            <person name="Katayama S."/>
            <person name="Gough J."/>
            <person name="Frith M.C."/>
            <person name="Maeda N."/>
            <person name="Oyama R."/>
            <person name="Ravasi T."/>
            <person name="Lenhard B."/>
            <person name="Wells C."/>
            <person name="Kodzius R."/>
            <person name="Shimokawa K."/>
            <person name="Bajic V.B."/>
            <person name="Brenner S.E."/>
            <person name="Batalov S."/>
            <person name="Forrest A.R."/>
            <person name="Zavolan M."/>
            <person name="Davis M.J."/>
            <person name="Wilming L.G."/>
            <person name="Aidinis V."/>
            <person name="Allen J.E."/>
            <person name="Ambesi-Impiombato A."/>
            <person name="Apweiler R."/>
            <person name="Aturaliya R.N."/>
            <person name="Bailey T.L."/>
            <person name="Bansal M."/>
            <person name="Baxter L."/>
            <person name="Beisel K.W."/>
            <person name="Bersano T."/>
            <person name="Bono H."/>
            <person name="Chalk A.M."/>
            <person name="Chiu K.P."/>
            <person name="Choudhary V."/>
            <person name="Christoffels A."/>
            <person name="Clutterbuck D.R."/>
            <person name="Crowe M.L."/>
            <person name="Dalla E."/>
            <person name="Dalrymple B.P."/>
            <person name="de Bono B."/>
            <person name="Della Gatta G."/>
            <person name="di Bernardo D."/>
            <person name="Down T."/>
            <person name="Engstrom P."/>
            <person name="Fagiolini M."/>
            <person name="Faulkner G."/>
            <person name="Fletcher C.F."/>
            <person name="Fukushima T."/>
            <person name="Furuno M."/>
            <person name="Futaki S."/>
            <person name="Gariboldi M."/>
            <person name="Georgii-Hemming P."/>
            <person name="Gingeras T.R."/>
            <person name="Gojobori T."/>
            <person name="Green R.E."/>
            <person name="Gustincich S."/>
            <person name="Harbers M."/>
            <person name="Hayashi Y."/>
            <person name="Hensch T.K."/>
            <person name="Hirokawa N."/>
            <person name="Hill D."/>
            <person name="Huminiecki L."/>
            <person name="Iacono M."/>
            <person name="Ikeo K."/>
            <person name="Iwama A."/>
            <person name="Ishikawa T."/>
            <person name="Jakt M."/>
            <person name="Kanapin A."/>
            <person name="Katoh M."/>
            <person name="Kawasawa Y."/>
            <person name="Kelso J."/>
            <person name="Kitamura H."/>
            <person name="Kitano H."/>
            <person name="Kollias G."/>
            <person name="Krishnan S.P."/>
            <person name="Kruger A."/>
            <person name="Kummerfeld S.K."/>
            <person name="Kurochkin I.V."/>
            <person name="Lareau L.F."/>
            <person name="Lazarevic D."/>
            <person name="Lipovich L."/>
            <person name="Liu J."/>
            <person name="Liuni S."/>
            <person name="McWilliam S."/>
            <person name="Madan Babu M."/>
            <person name="Madera M."/>
            <person name="Marchionni L."/>
            <person name="Matsuda H."/>
            <person name="Matsuzawa S."/>
            <person name="Miki H."/>
            <person name="Mignone F."/>
            <person name="Miyake S."/>
            <person name="Morris K."/>
            <person name="Mottagui-Tabar S."/>
            <person name="Mulder N."/>
            <person name="Nakano N."/>
            <person name="Nakauchi H."/>
            <person name="Ng P."/>
            <person name="Nilsson R."/>
            <person name="Nishiguchi S."/>
            <person name="Nishikawa S."/>
            <person name="Nori F."/>
            <person name="Ohara O."/>
            <person name="Okazaki Y."/>
            <person name="Orlando V."/>
            <person name="Pang K.C."/>
            <person name="Pavan W.J."/>
            <person name="Pavesi G."/>
            <person name="Pesole G."/>
            <person name="Petrovsky N."/>
            <person name="Piazza S."/>
            <person name="Reed J."/>
            <person name="Reid J.F."/>
            <person name="Ring B.Z."/>
            <person name="Ringwald M."/>
            <person name="Rost B."/>
            <person name="Ruan Y."/>
            <person name="Salzberg S.L."/>
            <person name="Sandelin A."/>
            <person name="Schneider C."/>
            <person name="Schoenbach C."/>
            <person name="Sekiguchi K."/>
            <person name="Semple C.A."/>
            <person name="Seno S."/>
            <person name="Sessa L."/>
            <person name="Sheng Y."/>
            <person name="Shibata Y."/>
            <person name="Shimada H."/>
            <person name="Shimada K."/>
            <person name="Silva D."/>
            <person name="Sinclair B."/>
            <person name="Sperling S."/>
            <person name="Stupka E."/>
            <person name="Sugiura K."/>
            <person name="Sultana R."/>
            <person name="Takenaka Y."/>
            <person name="Taki K."/>
            <person name="Tammoja K."/>
            <person name="Tan S.L."/>
            <person name="Tang S."/>
            <person name="Taylor M.S."/>
            <person name="Tegner J."/>
            <person name="Teichmann S.A."/>
            <person name="Ueda H.R."/>
            <person name="van Nimwegen E."/>
            <person name="Verardo R."/>
            <person name="Wei C.L."/>
            <person name="Yagi K."/>
            <person name="Yamanishi H."/>
            <person name="Zabarovsky E."/>
            <person name="Zhu S."/>
            <person name="Zimmer A."/>
            <person name="Hide W."/>
            <person name="Bult C."/>
            <person name="Grimmond S.M."/>
            <person name="Teasdale R.D."/>
            <person name="Liu E.T."/>
            <person name="Brusic V."/>
            <person name="Quackenbush J."/>
            <person name="Wahlestedt C."/>
            <person name="Mattick J.S."/>
            <person name="Hume D.A."/>
            <person name="Kai C."/>
            <person name="Sasaki D."/>
            <person name="Tomaru Y."/>
            <person name="Fukuda S."/>
            <person name="Kanamori-Katayama M."/>
            <person name="Suzuki M."/>
            <person name="Aoki J."/>
            <person name="Arakawa T."/>
            <person name="Iida J."/>
            <person name="Imamura K."/>
            <person name="Itoh M."/>
            <person name="Kato T."/>
            <person name="Kawaji H."/>
            <person name="Kawagashira N."/>
            <person name="Kawashima T."/>
            <person name="Kojima M."/>
            <person name="Kondo S."/>
            <person name="Konno H."/>
            <person name="Nakano K."/>
            <person name="Ninomiya N."/>
            <person name="Nishio T."/>
            <person name="Okada M."/>
            <person name="Plessy C."/>
            <person name="Shibata K."/>
            <person name="Shiraki T."/>
            <person name="Suzuki S."/>
            <person name="Tagami M."/>
            <person name="Waki K."/>
            <person name="Watahiki A."/>
            <person name="Okamura-Oho Y."/>
            <person name="Suzuki H."/>
            <person name="Kawai J."/>
            <person name="Hayashizaki Y."/>
        </authorList>
    </citation>
    <scope>NUCLEOTIDE SEQUENCE [LARGE SCALE MRNA] (ISOFORMS 1 AND 2)</scope>
    <source>
        <strain>C57BL/6J</strain>
        <tissue>Cerebellum</tissue>
        <tissue>Corpora quadrigemina</tissue>
        <tissue>Embryo</tissue>
    </source>
</reference>
<reference key="2">
    <citation type="journal article" date="2004" name="Genome Res.">
        <title>The status, quality, and expansion of the NIH full-length cDNA project: the Mammalian Gene Collection (MGC).</title>
        <authorList>
            <consortium name="The MGC Project Team"/>
        </authorList>
    </citation>
    <scope>NUCLEOTIDE SEQUENCE [LARGE SCALE MRNA] (ISOFORM 1)</scope>
    <source>
        <strain>Czech II</strain>
        <tissue>Mammary tumor</tissue>
    </source>
</reference>
<reference key="3">
    <citation type="journal article" date="2013" name="Proc. Natl. Acad. Sci. U.S.A.">
        <title>Label-free quantitative proteomics of the lysine acetylome in mitochondria identifies substrates of SIRT3 in metabolic pathways.</title>
        <authorList>
            <person name="Rardin M.J."/>
            <person name="Newman J.C."/>
            <person name="Held J.M."/>
            <person name="Cusack M.P."/>
            <person name="Sorensen D.J."/>
            <person name="Li B."/>
            <person name="Schilling B."/>
            <person name="Mooney S.D."/>
            <person name="Kahn C.R."/>
            <person name="Verdin E."/>
            <person name="Gibson B.W."/>
        </authorList>
    </citation>
    <scope>ACETYLATION [LARGE SCALE ANALYSIS] AT LYS-299</scope>
    <scope>IDENTIFICATION BY MASS SPECTROMETRY [LARGE SCALE ANALYSIS]</scope>
    <source>
        <tissue>Liver</tissue>
    </source>
</reference>
<organism>
    <name type="scientific">Mus musculus</name>
    <name type="common">Mouse</name>
    <dbReference type="NCBI Taxonomy" id="10090"/>
    <lineage>
        <taxon>Eukaryota</taxon>
        <taxon>Metazoa</taxon>
        <taxon>Chordata</taxon>
        <taxon>Craniata</taxon>
        <taxon>Vertebrata</taxon>
        <taxon>Euteleostomi</taxon>
        <taxon>Mammalia</taxon>
        <taxon>Eutheria</taxon>
        <taxon>Euarchontoglires</taxon>
        <taxon>Glires</taxon>
        <taxon>Rodentia</taxon>
        <taxon>Myomorpha</taxon>
        <taxon>Muroidea</taxon>
        <taxon>Muridae</taxon>
        <taxon>Murinae</taxon>
        <taxon>Mus</taxon>
        <taxon>Mus</taxon>
    </lineage>
</organism>
<sequence>MLMLRRTAGAIPKPPKSKVYGFLRRFSVHPRTLSCHKLVLGIETSCDDTGAAVVDETGNVLGEALHSQTQVHLKTGGIVPPVAQQLHRENIQRIVEETLSACRITPSDLSAIATTIKPGLALSLGVGLSFSLQLVNQFKKPFIPIHHMEAHALTIRLTNKVEFPFLVLLISGGHCLLALVQGVSDFLLLGKSLDIAPGDMLDKVARRLSLIKHPECSTMSGGKAIEQLAKDGNRFHFTINPPMQNAKNCDFSFTGLQHITDKLITHKEKEEGIEKGQILSSAADIAAAVQHATACHLAKRTHRAILFCKQKNLLSPANAVLVVSGGVASNLYIRKALEIVANATQCTLLCPPPRLCTDNGIMIAWNGIERLRAGLGVLHDVEDIRYEPKCPLGVDISREVAEAAIKVPRLKMAL</sequence>
<comment type="function">
    <text evidence="2">Required for the formation of a threonylcarbamoyl group on adenosine at position 37 (t(6)A37) in mitochondrial tRNAs that read codons beginning with adenine. Probably involved in the transfer of the threonylcarbamoyl moiety of threonylcarbamoyl-AMP (TC-AMP) to the N6 group of A37. Involved in mitochondrial genome maintenance.</text>
</comment>
<comment type="catalytic activity">
    <reaction evidence="2">
        <text>L-threonylcarbamoyladenylate + adenosine(37) in tRNA = N(6)-L-threonylcarbamoyladenosine(37) in tRNA + AMP + H(+)</text>
        <dbReference type="Rhea" id="RHEA:37059"/>
        <dbReference type="Rhea" id="RHEA-COMP:10162"/>
        <dbReference type="Rhea" id="RHEA-COMP:10163"/>
        <dbReference type="ChEBI" id="CHEBI:15378"/>
        <dbReference type="ChEBI" id="CHEBI:73682"/>
        <dbReference type="ChEBI" id="CHEBI:74411"/>
        <dbReference type="ChEBI" id="CHEBI:74418"/>
        <dbReference type="ChEBI" id="CHEBI:456215"/>
        <dbReference type="EC" id="2.3.1.234"/>
    </reaction>
</comment>
<comment type="cofactor">
    <cofactor evidence="2">
        <name>a divalent metal cation</name>
        <dbReference type="ChEBI" id="CHEBI:60240"/>
    </cofactor>
    <text evidence="2">Binds 1 divalent metal cation per subunit.</text>
</comment>
<comment type="subunit">
    <text evidence="2">Monomer.</text>
</comment>
<comment type="subcellular location">
    <subcellularLocation>
        <location evidence="2">Mitochondrion</location>
    </subcellularLocation>
</comment>
<comment type="alternative products">
    <event type="alternative splicing"/>
    <isoform>
        <id>Q6PEB4-1</id>
        <name>1</name>
        <sequence type="displayed"/>
    </isoform>
    <isoform>
        <id>Q6PEB4-2</id>
        <name>2</name>
        <sequence type="described" ref="VSP_028831 VSP_028832"/>
    </isoform>
</comment>
<comment type="similarity">
    <text evidence="2">Belongs to the KAE1 / TsaD family.</text>
</comment>
<evidence type="ECO:0000250" key="1">
    <source>
        <dbReference type="UniProtKB" id="Q9H4B0"/>
    </source>
</evidence>
<evidence type="ECO:0000255" key="2">
    <source>
        <dbReference type="HAMAP-Rule" id="MF_03179"/>
    </source>
</evidence>
<evidence type="ECO:0000303" key="3">
    <source>
    </source>
</evidence>
<evidence type="ECO:0000305" key="4"/>
<evidence type="ECO:0007744" key="5">
    <source>
    </source>
</evidence>
<feature type="transit peptide" description="Mitochondrion" evidence="2">
    <location>
        <begin position="1"/>
        <end position="29"/>
    </location>
</feature>
<feature type="chain" id="PRO_0000307779" description="tRNA N6-adenosine threonylcarbamoyltransferase, mitochondrial">
    <location>
        <begin position="30"/>
        <end position="414"/>
    </location>
</feature>
<feature type="binding site" evidence="2">
    <location>
        <position position="147"/>
    </location>
    <ligand>
        <name>a divalent metal cation</name>
        <dbReference type="ChEBI" id="CHEBI:60240"/>
    </ligand>
</feature>
<feature type="binding site" evidence="2">
    <location>
        <position position="151"/>
    </location>
    <ligand>
        <name>a divalent metal cation</name>
        <dbReference type="ChEBI" id="CHEBI:60240"/>
    </ligand>
</feature>
<feature type="binding site" evidence="2">
    <location>
        <begin position="169"/>
        <end position="173"/>
    </location>
    <ligand>
        <name>substrate</name>
    </ligand>
</feature>
<feature type="binding site" evidence="2">
    <location>
        <position position="202"/>
    </location>
    <ligand>
        <name>substrate</name>
    </ligand>
</feature>
<feature type="binding site" evidence="2">
    <location>
        <position position="222"/>
    </location>
    <ligand>
        <name>substrate</name>
    </ligand>
</feature>
<feature type="binding site" evidence="2">
    <location>
        <position position="226"/>
    </location>
    <ligand>
        <name>substrate</name>
    </ligand>
</feature>
<feature type="binding site" evidence="2">
    <location>
        <begin position="329"/>
        <end position="330"/>
    </location>
    <ligand>
        <name>substrate</name>
    </ligand>
</feature>
<feature type="binding site" evidence="2">
    <location>
        <position position="357"/>
    </location>
    <ligand>
        <name>substrate</name>
    </ligand>
</feature>
<feature type="binding site" evidence="2">
    <location>
        <position position="358"/>
    </location>
    <ligand>
        <name>a divalent metal cation</name>
        <dbReference type="ChEBI" id="CHEBI:60240"/>
    </ligand>
</feature>
<feature type="modified residue" description="N6-acetyllysine" evidence="1">
    <location>
        <position position="74"/>
    </location>
</feature>
<feature type="modified residue" description="N6-acetyllysine" evidence="1">
    <location>
        <position position="140"/>
    </location>
</feature>
<feature type="modified residue" description="N6-acetyllysine" evidence="1">
    <location>
        <position position="203"/>
    </location>
</feature>
<feature type="modified residue" description="N6-acetyllysine" evidence="1">
    <location>
        <position position="230"/>
    </location>
</feature>
<feature type="modified residue" description="N6-acetyllysine" evidence="5">
    <location>
        <position position="299"/>
    </location>
</feature>
<feature type="splice variant" id="VSP_028831" description="In isoform 2." evidence="3">
    <original>NGIERL</original>
    <variation>HGGARL</variation>
    <location>
        <begin position="366"/>
        <end position="371"/>
    </location>
</feature>
<feature type="splice variant" id="VSP_028832" description="In isoform 2." evidence="3">
    <location>
        <begin position="372"/>
        <end position="414"/>
    </location>
</feature>
<feature type="sequence conflict" description="In Ref. 2; AAH58172." evidence="4" ref="2">
    <original>C</original>
    <variation>S</variation>
    <location>
        <position position="102"/>
    </location>
</feature>
<feature type="sequence conflict" description="In Ref. 2; AAH58172." evidence="4" ref="2">
    <original>Q</original>
    <variation>R</variation>
    <location>
        <position position="137"/>
    </location>
</feature>
<feature type="sequence conflict" description="In Ref. 2; AAH58172." evidence="4" ref="2">
    <original>Q</original>
    <variation>H</variation>
    <location>
        <position position="227"/>
    </location>
</feature>
<feature type="sequence conflict" description="In Ref. 1; BAB27506." evidence="4" ref="1">
    <original>G</original>
    <variation>E</variation>
    <location>
        <position position="276"/>
    </location>
</feature>
<feature type="sequence conflict" description="In Ref. 2; AAH58172." evidence="4" ref="2">
    <original>V</original>
    <variation>I</variation>
    <location>
        <position position="394"/>
    </location>
</feature>
<accession>Q6PEB4</accession>
<accession>Q3UVG1</accession>
<accession>Q8BLB6</accession>
<accession>Q9D0N0</accession>
<gene>
    <name evidence="2" type="primary">Osgepl1</name>
</gene>
<keyword id="KW-0007">Acetylation</keyword>
<keyword id="KW-0012">Acyltransferase</keyword>
<keyword id="KW-0025">Alternative splicing</keyword>
<keyword id="KW-0479">Metal-binding</keyword>
<keyword id="KW-0496">Mitochondrion</keyword>
<keyword id="KW-1185">Reference proteome</keyword>
<keyword id="KW-0808">Transferase</keyword>
<keyword id="KW-0809">Transit peptide</keyword>
<keyword id="KW-0819">tRNA processing</keyword>
<name>OSGL1_MOUSE</name>
<proteinExistence type="evidence at protein level"/>
<dbReference type="EC" id="2.3.1.234" evidence="2"/>
<dbReference type="EMBL" id="AK011265">
    <property type="protein sequence ID" value="BAB27506.1"/>
    <property type="molecule type" value="mRNA"/>
</dbReference>
<dbReference type="EMBL" id="AK045669">
    <property type="protein sequence ID" value="BAC32450.1"/>
    <property type="molecule type" value="mRNA"/>
</dbReference>
<dbReference type="EMBL" id="AK137332">
    <property type="protein sequence ID" value="BAE23308.1"/>
    <property type="molecule type" value="mRNA"/>
</dbReference>
<dbReference type="EMBL" id="BC058172">
    <property type="protein sequence ID" value="AAH58172.1"/>
    <property type="molecule type" value="mRNA"/>
</dbReference>
<dbReference type="CCDS" id="CCDS14953.1">
    <molecule id="Q6PEB4-1"/>
</dbReference>
<dbReference type="RefSeq" id="NP_001272768.1">
    <molecule id="Q6PEB4-1"/>
    <property type="nucleotide sequence ID" value="NM_001285839.1"/>
</dbReference>
<dbReference type="SMR" id="Q6PEB4"/>
<dbReference type="FunCoup" id="Q6PEB4">
    <property type="interactions" value="2827"/>
</dbReference>
<dbReference type="STRING" id="10090.ENSMUSP00000110128"/>
<dbReference type="iPTMnet" id="Q6PEB4"/>
<dbReference type="PhosphoSitePlus" id="Q6PEB4"/>
<dbReference type="PaxDb" id="10090-ENSMUSP00000110128"/>
<dbReference type="ProteomicsDB" id="294226">
    <molecule id="Q6PEB4-1"/>
</dbReference>
<dbReference type="ProteomicsDB" id="294227">
    <molecule id="Q6PEB4-2"/>
</dbReference>
<dbReference type="Antibodypedia" id="34028">
    <property type="antibodies" value="75 antibodies from 21 providers"/>
</dbReference>
<dbReference type="DNASU" id="72085"/>
<dbReference type="Ensembl" id="ENSMUST00000027265.10">
    <molecule id="Q6PEB4-1"/>
    <property type="protein sequence ID" value="ENSMUSP00000027265.4"/>
    <property type="gene ID" value="ENSMUSG00000026096.15"/>
</dbReference>
<dbReference type="Ensembl" id="ENSMUST00000114484.8">
    <molecule id="Q6PEB4-1"/>
    <property type="protein sequence ID" value="ENSMUSP00000110128.2"/>
    <property type="gene ID" value="ENSMUSG00000026096.15"/>
</dbReference>
<dbReference type="Ensembl" id="ENSMUST00000135614.8">
    <molecule id="Q6PEB4-2"/>
    <property type="protein sequence ID" value="ENSMUSP00000137994.2"/>
    <property type="gene ID" value="ENSMUSG00000026096.15"/>
</dbReference>
<dbReference type="GeneID" id="72085"/>
<dbReference type="KEGG" id="mmu:72085"/>
<dbReference type="UCSC" id="uc007aza.2">
    <molecule id="Q6PEB4-1"/>
    <property type="organism name" value="mouse"/>
</dbReference>
<dbReference type="AGR" id="MGI:1919335"/>
<dbReference type="CTD" id="64172"/>
<dbReference type="MGI" id="MGI:1919335">
    <property type="gene designation" value="Osgepl1"/>
</dbReference>
<dbReference type="VEuPathDB" id="HostDB:ENSMUSG00000026096"/>
<dbReference type="eggNOG" id="KOG2707">
    <property type="taxonomic scope" value="Eukaryota"/>
</dbReference>
<dbReference type="GeneTree" id="ENSGT00940000153744"/>
<dbReference type="HOGENOM" id="CLU_023208_1_2_1"/>
<dbReference type="InParanoid" id="Q6PEB4"/>
<dbReference type="OMA" id="NAAMIGC"/>
<dbReference type="OrthoDB" id="10259622at2759"/>
<dbReference type="PhylomeDB" id="Q6PEB4"/>
<dbReference type="TreeFam" id="TF314600"/>
<dbReference type="BioGRID-ORCS" id="72085">
    <property type="hits" value="4 hits in 78 CRISPR screens"/>
</dbReference>
<dbReference type="ChiTaRS" id="Osgepl1">
    <property type="organism name" value="mouse"/>
</dbReference>
<dbReference type="PRO" id="PR:Q6PEB4"/>
<dbReference type="Proteomes" id="UP000000589">
    <property type="component" value="Chromosome 1"/>
</dbReference>
<dbReference type="RNAct" id="Q6PEB4">
    <property type="molecule type" value="protein"/>
</dbReference>
<dbReference type="Bgee" id="ENSMUSG00000026096">
    <property type="expression patterns" value="Expressed in interventricular septum and 223 other cell types or tissues"/>
</dbReference>
<dbReference type="ExpressionAtlas" id="Q6PEB4">
    <property type="expression patterns" value="baseline and differential"/>
</dbReference>
<dbReference type="GO" id="GO:0005739">
    <property type="term" value="C:mitochondrion"/>
    <property type="evidence" value="ECO:0007005"/>
    <property type="project" value="MGI"/>
</dbReference>
<dbReference type="GO" id="GO:0046872">
    <property type="term" value="F:metal ion binding"/>
    <property type="evidence" value="ECO:0007669"/>
    <property type="project" value="UniProtKB-KW"/>
</dbReference>
<dbReference type="GO" id="GO:0061711">
    <property type="term" value="F:N(6)-L-threonylcarbamoyladenine synthase activity"/>
    <property type="evidence" value="ECO:0000250"/>
    <property type="project" value="UniProtKB"/>
</dbReference>
<dbReference type="GO" id="GO:0002949">
    <property type="term" value="P:tRNA threonylcarbamoyladenosine modification"/>
    <property type="evidence" value="ECO:0000250"/>
    <property type="project" value="UniProtKB"/>
</dbReference>
<dbReference type="CDD" id="cd24134">
    <property type="entry name" value="ASKHA_NBD_OSGEPL1_QRI7_euk"/>
    <property type="match status" value="1"/>
</dbReference>
<dbReference type="FunFam" id="3.30.420.40:FF:000106">
    <property type="entry name" value="Probable tRNA N6-adenosine threonylcarbamoyltransferase, mitochondrial"/>
    <property type="match status" value="1"/>
</dbReference>
<dbReference type="Gene3D" id="3.30.420.40">
    <property type="match status" value="2"/>
</dbReference>
<dbReference type="HAMAP" id="MF_01445">
    <property type="entry name" value="TsaD"/>
    <property type="match status" value="1"/>
</dbReference>
<dbReference type="InterPro" id="IPR043129">
    <property type="entry name" value="ATPase_NBD"/>
</dbReference>
<dbReference type="InterPro" id="IPR000905">
    <property type="entry name" value="Gcp-like_dom"/>
</dbReference>
<dbReference type="InterPro" id="IPR017861">
    <property type="entry name" value="KAE1/TsaD"/>
</dbReference>
<dbReference type="InterPro" id="IPR022450">
    <property type="entry name" value="TsaD"/>
</dbReference>
<dbReference type="NCBIfam" id="TIGR00329">
    <property type="entry name" value="gcp_kae1"/>
    <property type="match status" value="1"/>
</dbReference>
<dbReference type="PANTHER" id="PTHR11735">
    <property type="entry name" value="TRNA N6-ADENOSINE THREONYLCARBAMOYLTRANSFERASE"/>
    <property type="match status" value="1"/>
</dbReference>
<dbReference type="PANTHER" id="PTHR11735:SF6">
    <property type="entry name" value="TRNA N6-ADENOSINE THREONYLCARBAMOYLTRANSFERASE, MITOCHONDRIAL"/>
    <property type="match status" value="1"/>
</dbReference>
<dbReference type="Pfam" id="PF00814">
    <property type="entry name" value="TsaD"/>
    <property type="match status" value="1"/>
</dbReference>
<dbReference type="PRINTS" id="PR00789">
    <property type="entry name" value="OSIALOPTASE"/>
</dbReference>
<dbReference type="SUPFAM" id="SSF53067">
    <property type="entry name" value="Actin-like ATPase domain"/>
    <property type="match status" value="1"/>
</dbReference>
<protein>
    <recommendedName>
        <fullName evidence="2">tRNA N6-adenosine threonylcarbamoyltransferase, mitochondrial</fullName>
        <ecNumber evidence="2">2.3.1.234</ecNumber>
    </recommendedName>
    <alternativeName>
        <fullName evidence="2">N6-L-threonylcarbamoyladenine synthase</fullName>
        <shortName evidence="2">t(6)A synthase</shortName>
    </alternativeName>
    <alternativeName>
        <fullName evidence="2">O-sialoglycoprotein endopeptidase-like protein 1</fullName>
    </alternativeName>
    <alternativeName>
        <fullName evidence="2">t(6)A37 threonylcarbamoyladenosine biosynthesis protein Osgepl1</fullName>
    </alternativeName>
    <alternativeName>
        <fullName evidence="2">tRNA threonylcarbamoyladenosine biosynthesis protein Osgepl1</fullName>
    </alternativeName>
</protein>